<feature type="signal peptide" evidence="2">
    <location>
        <begin position="1"/>
        <end position="33"/>
    </location>
</feature>
<feature type="chain" id="PRO_0000371679" description="Probable pectinesterase/pectinesterase inhibitor 23">
    <location>
        <begin position="34"/>
        <end position="568"/>
    </location>
</feature>
<feature type="region of interest" description="Pectinesterase inhibitor 23">
    <location>
        <begin position="45"/>
        <end position="198"/>
    </location>
</feature>
<feature type="region of interest" description="Pectinesterase 23">
    <location>
        <begin position="251"/>
        <end position="548"/>
    </location>
</feature>
<feature type="active site" description="Proton donor; for pectinesterase activity" evidence="3">
    <location>
        <position position="386"/>
    </location>
</feature>
<feature type="active site" description="Nucleophile; for pectinesterase activity" evidence="3">
    <location>
        <position position="407"/>
    </location>
</feature>
<feature type="binding site" evidence="1">
    <location>
        <position position="333"/>
    </location>
    <ligand>
        <name>substrate</name>
        <note>for pectinesterase activity</note>
    </ligand>
</feature>
<feature type="binding site" evidence="1">
    <location>
        <position position="363"/>
    </location>
    <ligand>
        <name>substrate</name>
        <note>for pectinesterase activity</note>
    </ligand>
</feature>
<feature type="binding site" evidence="1">
    <location>
        <position position="475"/>
    </location>
    <ligand>
        <name>substrate</name>
        <note>for pectinesterase activity</note>
    </ligand>
</feature>
<feature type="binding site" evidence="1">
    <location>
        <position position="477"/>
    </location>
    <ligand>
        <name>substrate</name>
        <note>for pectinesterase activity</note>
    </ligand>
</feature>
<feature type="site" description="Transition state stabilizer" evidence="1">
    <location>
        <position position="385"/>
    </location>
</feature>
<feature type="glycosylation site" description="N-linked (GlcNAc...) asparagine" evidence="2">
    <location>
        <position position="94"/>
    </location>
</feature>
<feature type="glycosylation site" description="N-linked (GlcNAc...) asparagine" evidence="2">
    <location>
        <position position="210"/>
    </location>
</feature>
<feature type="glycosylation site" description="N-linked (GlcNAc...) asparagine" evidence="2">
    <location>
        <position position="316"/>
    </location>
</feature>
<feature type="disulfide bond" evidence="1">
    <location>
        <begin position="400"/>
        <end position="420"/>
    </location>
</feature>
<feature type="sequence conflict" description="In Ref. 3; BAC42959." evidence="5" ref="3">
    <original>K</original>
    <variation>E</variation>
    <location>
        <position position="107"/>
    </location>
</feature>
<feature type="sequence conflict" description="In Ref. 3; BAC42959." evidence="5" ref="3">
    <original>V</original>
    <variation>A</variation>
    <location>
        <position position="568"/>
    </location>
</feature>
<gene>
    <name type="primary">PME23</name>
    <name type="synonym">ARATH23</name>
    <name type="ordered locus">At3g06830</name>
    <name type="ORF">F3E22.3</name>
</gene>
<accession>Q8GXA1</accession>
<accession>A4FVQ5</accession>
<accession>Q9M7Y9</accession>
<name>PME23_ARATH</name>
<organism>
    <name type="scientific">Arabidopsis thaliana</name>
    <name type="common">Mouse-ear cress</name>
    <dbReference type="NCBI Taxonomy" id="3702"/>
    <lineage>
        <taxon>Eukaryota</taxon>
        <taxon>Viridiplantae</taxon>
        <taxon>Streptophyta</taxon>
        <taxon>Embryophyta</taxon>
        <taxon>Tracheophyta</taxon>
        <taxon>Spermatophyta</taxon>
        <taxon>Magnoliopsida</taxon>
        <taxon>eudicotyledons</taxon>
        <taxon>Gunneridae</taxon>
        <taxon>Pentapetalae</taxon>
        <taxon>rosids</taxon>
        <taxon>malvids</taxon>
        <taxon>Brassicales</taxon>
        <taxon>Brassicaceae</taxon>
        <taxon>Camelineae</taxon>
        <taxon>Arabidopsis</taxon>
    </lineage>
</organism>
<proteinExistence type="evidence at transcript level"/>
<sequence length="568" mass="61886">MGSDGDKKKKFIVAGSVSGFLVIMVVSVAVVTSKHSPKDDENHIRKTTKAVQAVCAPTDFKDTCVNSLMGASPDSDDPVDLIKLGFKVTIKSINESLEKASGDIKAKADKNPEAKGAFELCEKLMIDAIDDLKKCMDHGFSVDQIEVFVEDLRVWLSGSIAFQQTCMDSFGEIKSNLMQDMLKIFKTSRELSSNSLAMVTRISTLIPNSNLTGLTGALAKYARKLLSTEDSIPTWVGPEARRLMAAQGGGPGPVKANAVVAQDGTGQFKTITDALNAVPKGNKVPFIIHIKEGIYKEKVTVTKKMPHVTFIGDGPNKTLITGSLNFGIGKVKTFLTATITIEGDHFTAKNIGIENTAGPEGGQAVALRVSADYAVFHSCQIDGHQDTLYVHSHRQFYRDCTVSGTVDFIFGDAKCILQNCKIVVRKPNKGQTCMVTAQGRSNVRESTGLVLHGCHITGDPAYIPMKSVNKAYLGRPWKEFSRTIIMKTTIDDVIDPAGWLPWSGDFALKTLYYAEHMNTGPGSNQAQRVKWPGIKKLTPQDALLYTGDRFLRGDTWIPQTQVPYTAKV</sequence>
<comment type="function">
    <text evidence="1">Acts in the modification of cell walls via demethylesterification of cell wall pectin.</text>
</comment>
<comment type="catalytic activity">
    <reaction>
        <text>[(1-&gt;4)-alpha-D-galacturonosyl methyl ester](n) + n H2O = [(1-&gt;4)-alpha-D-galacturonosyl](n) + n methanol + n H(+)</text>
        <dbReference type="Rhea" id="RHEA:22380"/>
        <dbReference type="Rhea" id="RHEA-COMP:14570"/>
        <dbReference type="Rhea" id="RHEA-COMP:14573"/>
        <dbReference type="ChEBI" id="CHEBI:15377"/>
        <dbReference type="ChEBI" id="CHEBI:15378"/>
        <dbReference type="ChEBI" id="CHEBI:17790"/>
        <dbReference type="ChEBI" id="CHEBI:140522"/>
        <dbReference type="ChEBI" id="CHEBI:140523"/>
        <dbReference type="EC" id="3.1.1.11"/>
    </reaction>
</comment>
<comment type="pathway">
    <text>Glycan metabolism; pectin degradation; 2-dehydro-3-deoxy-D-gluconate from pectin: step 1/5.</text>
</comment>
<comment type="subcellular location">
    <subcellularLocation>
        <location evidence="1">Secreted</location>
        <location evidence="1">Cell wall</location>
    </subcellularLocation>
</comment>
<comment type="tissue specificity">
    <text evidence="4">Expressed in mature pollen grains in the anthers and on the stigma. Found in pollen tubes within the style.</text>
</comment>
<comment type="miscellaneous">
    <text>The PMEI region may act as an autoinhibitory domain and prevent untimely PME activity during transport.</text>
</comment>
<comment type="similarity">
    <text evidence="5">In the N-terminal section; belongs to the PMEI family.</text>
</comment>
<comment type="similarity">
    <text evidence="5">In the C-terminal section; belongs to the pectinesterase family.</text>
</comment>
<comment type="sequence caution" evidence="5">
    <conflict type="erroneous gene model prediction">
        <sequence resource="EMBL-CDS" id="AAF63815"/>
    </conflict>
</comment>
<keyword id="KW-0063">Aspartyl esterase</keyword>
<keyword id="KW-0134">Cell wall</keyword>
<keyword id="KW-0961">Cell wall biogenesis/degradation</keyword>
<keyword id="KW-1015">Disulfide bond</keyword>
<keyword id="KW-0325">Glycoprotein</keyword>
<keyword id="KW-0378">Hydrolase</keyword>
<keyword id="KW-1185">Reference proteome</keyword>
<keyword id="KW-0964">Secreted</keyword>
<keyword id="KW-0732">Signal</keyword>
<protein>
    <recommendedName>
        <fullName>Probable pectinesterase/pectinesterase inhibitor 23</fullName>
    </recommendedName>
    <domain>
        <recommendedName>
            <fullName>Pectinesterase inhibitor 23</fullName>
        </recommendedName>
        <alternativeName>
            <fullName>Pectin methylesterase inhibitor 23</fullName>
        </alternativeName>
    </domain>
    <domain>
        <recommendedName>
            <fullName>Pectinesterase 23</fullName>
            <shortName>PE 23</shortName>
            <ecNumber>3.1.1.11</ecNumber>
        </recommendedName>
        <alternativeName>
            <fullName>Pectin methylesterase 23</fullName>
            <shortName>AtPME23</shortName>
        </alternativeName>
    </domain>
</protein>
<evidence type="ECO:0000250" key="1"/>
<evidence type="ECO:0000255" key="2"/>
<evidence type="ECO:0000255" key="3">
    <source>
        <dbReference type="PROSITE-ProRule" id="PRU10040"/>
    </source>
</evidence>
<evidence type="ECO:0000269" key="4">
    <source>
    </source>
</evidence>
<evidence type="ECO:0000305" key="5"/>
<reference key="1">
    <citation type="journal article" date="2000" name="Nature">
        <title>Sequence and analysis of chromosome 3 of the plant Arabidopsis thaliana.</title>
        <authorList>
            <person name="Salanoubat M."/>
            <person name="Lemcke K."/>
            <person name="Rieger M."/>
            <person name="Ansorge W."/>
            <person name="Unseld M."/>
            <person name="Fartmann B."/>
            <person name="Valle G."/>
            <person name="Bloecker H."/>
            <person name="Perez-Alonso M."/>
            <person name="Obermaier B."/>
            <person name="Delseny M."/>
            <person name="Boutry M."/>
            <person name="Grivell L.A."/>
            <person name="Mache R."/>
            <person name="Puigdomenech P."/>
            <person name="De Simone V."/>
            <person name="Choisne N."/>
            <person name="Artiguenave F."/>
            <person name="Robert C."/>
            <person name="Brottier P."/>
            <person name="Wincker P."/>
            <person name="Cattolico L."/>
            <person name="Weissenbach J."/>
            <person name="Saurin W."/>
            <person name="Quetier F."/>
            <person name="Schaefer M."/>
            <person name="Mueller-Auer S."/>
            <person name="Gabel C."/>
            <person name="Fuchs M."/>
            <person name="Benes V."/>
            <person name="Wurmbach E."/>
            <person name="Drzonek H."/>
            <person name="Erfle H."/>
            <person name="Jordan N."/>
            <person name="Bangert S."/>
            <person name="Wiedelmann R."/>
            <person name="Kranz H."/>
            <person name="Voss H."/>
            <person name="Holland R."/>
            <person name="Brandt P."/>
            <person name="Nyakatura G."/>
            <person name="Vezzi A."/>
            <person name="D'Angelo M."/>
            <person name="Pallavicini A."/>
            <person name="Toppo S."/>
            <person name="Simionati B."/>
            <person name="Conrad A."/>
            <person name="Hornischer K."/>
            <person name="Kauer G."/>
            <person name="Loehnert T.-H."/>
            <person name="Nordsiek G."/>
            <person name="Reichelt J."/>
            <person name="Scharfe M."/>
            <person name="Schoen O."/>
            <person name="Bargues M."/>
            <person name="Terol J."/>
            <person name="Climent J."/>
            <person name="Navarro P."/>
            <person name="Collado C."/>
            <person name="Perez-Perez A."/>
            <person name="Ottenwaelder B."/>
            <person name="Duchemin D."/>
            <person name="Cooke R."/>
            <person name="Laudie M."/>
            <person name="Berger-Llauro C."/>
            <person name="Purnelle B."/>
            <person name="Masuy D."/>
            <person name="de Haan M."/>
            <person name="Maarse A.C."/>
            <person name="Alcaraz J.-P."/>
            <person name="Cottet A."/>
            <person name="Casacuberta E."/>
            <person name="Monfort A."/>
            <person name="Argiriou A."/>
            <person name="Flores M."/>
            <person name="Liguori R."/>
            <person name="Vitale D."/>
            <person name="Mannhaupt G."/>
            <person name="Haase D."/>
            <person name="Schoof H."/>
            <person name="Rudd S."/>
            <person name="Zaccaria P."/>
            <person name="Mewes H.-W."/>
            <person name="Mayer K.F.X."/>
            <person name="Kaul S."/>
            <person name="Town C.D."/>
            <person name="Koo H.L."/>
            <person name="Tallon L.J."/>
            <person name="Jenkins J."/>
            <person name="Rooney T."/>
            <person name="Rizzo M."/>
            <person name="Walts A."/>
            <person name="Utterback T."/>
            <person name="Fujii C.Y."/>
            <person name="Shea T.P."/>
            <person name="Creasy T.H."/>
            <person name="Haas B."/>
            <person name="Maiti R."/>
            <person name="Wu D."/>
            <person name="Peterson J."/>
            <person name="Van Aken S."/>
            <person name="Pai G."/>
            <person name="Militscher J."/>
            <person name="Sellers P."/>
            <person name="Gill J.E."/>
            <person name="Feldblyum T.V."/>
            <person name="Preuss D."/>
            <person name="Lin X."/>
            <person name="Nierman W.C."/>
            <person name="Salzberg S.L."/>
            <person name="White O."/>
            <person name="Venter J.C."/>
            <person name="Fraser C.M."/>
            <person name="Kaneko T."/>
            <person name="Nakamura Y."/>
            <person name="Sato S."/>
            <person name="Kato T."/>
            <person name="Asamizu E."/>
            <person name="Sasamoto S."/>
            <person name="Kimura T."/>
            <person name="Idesawa K."/>
            <person name="Kawashima K."/>
            <person name="Kishida Y."/>
            <person name="Kiyokawa C."/>
            <person name="Kohara M."/>
            <person name="Matsumoto M."/>
            <person name="Matsuno A."/>
            <person name="Muraki A."/>
            <person name="Nakayama S."/>
            <person name="Nakazaki N."/>
            <person name="Shinpo S."/>
            <person name="Takeuchi C."/>
            <person name="Wada T."/>
            <person name="Watanabe A."/>
            <person name="Yamada M."/>
            <person name="Yasuda M."/>
            <person name="Tabata S."/>
        </authorList>
    </citation>
    <scope>NUCLEOTIDE SEQUENCE [LARGE SCALE GENOMIC DNA]</scope>
    <source>
        <strain>cv. Columbia</strain>
    </source>
</reference>
<reference key="2">
    <citation type="journal article" date="2017" name="Plant J.">
        <title>Araport11: a complete reannotation of the Arabidopsis thaliana reference genome.</title>
        <authorList>
            <person name="Cheng C.Y."/>
            <person name="Krishnakumar V."/>
            <person name="Chan A.P."/>
            <person name="Thibaud-Nissen F."/>
            <person name="Schobel S."/>
            <person name="Town C.D."/>
        </authorList>
    </citation>
    <scope>GENOME REANNOTATION</scope>
    <source>
        <strain>cv. Columbia</strain>
    </source>
</reference>
<reference key="3">
    <citation type="journal article" date="2002" name="Science">
        <title>Functional annotation of a full-length Arabidopsis cDNA collection.</title>
        <authorList>
            <person name="Seki M."/>
            <person name="Narusaka M."/>
            <person name="Kamiya A."/>
            <person name="Ishida J."/>
            <person name="Satou M."/>
            <person name="Sakurai T."/>
            <person name="Nakajima M."/>
            <person name="Enju A."/>
            <person name="Akiyama K."/>
            <person name="Oono Y."/>
            <person name="Muramatsu M."/>
            <person name="Hayashizaki Y."/>
            <person name="Kawai J."/>
            <person name="Carninci P."/>
            <person name="Itoh M."/>
            <person name="Ishii Y."/>
            <person name="Arakawa T."/>
            <person name="Shibata K."/>
            <person name="Shinagawa A."/>
            <person name="Shinozaki K."/>
        </authorList>
    </citation>
    <scope>NUCLEOTIDE SEQUENCE [LARGE SCALE MRNA]</scope>
    <source>
        <strain>cv. Columbia</strain>
    </source>
</reference>
<reference key="4">
    <citation type="submission" date="2007-03" db="EMBL/GenBank/DDBJ databases">
        <title>Arabidopsis ORF clones.</title>
        <authorList>
            <person name="Bautista V.R."/>
            <person name="Kim C.J."/>
            <person name="Chen H."/>
            <person name="Wu S.Y."/>
            <person name="De Los Reyes C."/>
            <person name="Ecker J.R."/>
        </authorList>
    </citation>
    <scope>NUCLEOTIDE SEQUENCE [LARGE SCALE MRNA]</scope>
    <source>
        <strain>cv. Columbia</strain>
    </source>
</reference>
<reference key="5">
    <citation type="journal article" date="2004" name="Carbohydr. Res.">
        <title>Pectin methylesterases: sequence-structural features and phylogenetic relationships.</title>
        <authorList>
            <person name="Markovic O."/>
            <person name="Janecek S."/>
        </authorList>
    </citation>
    <scope>GENE FAMILY</scope>
    <scope>NOMENCLATURE</scope>
</reference>
<reference key="6">
    <citation type="journal article" date="2006" name="Planta">
        <title>Comprehensive expression profiling of the pectin methylesterase gene family during silique development in Arabidopsis thaliana.</title>
        <authorList>
            <person name="Louvet R."/>
            <person name="Cavel E."/>
            <person name="Gutierrez L."/>
            <person name="Guenin S."/>
            <person name="Roger D."/>
            <person name="Gillet F."/>
            <person name="Guerineau F."/>
            <person name="Pelloux J."/>
        </authorList>
    </citation>
    <scope>TISSUE SPECIFICITY</scope>
</reference>
<dbReference type="EC" id="3.1.1.11"/>
<dbReference type="EMBL" id="AC023912">
    <property type="protein sequence ID" value="AAF63815.1"/>
    <property type="status" value="ALT_SEQ"/>
    <property type="molecule type" value="Genomic_DNA"/>
</dbReference>
<dbReference type="EMBL" id="CP002686">
    <property type="protein sequence ID" value="AEE74464.1"/>
    <property type="molecule type" value="Genomic_DNA"/>
</dbReference>
<dbReference type="EMBL" id="AK118345">
    <property type="protein sequence ID" value="BAC42959.2"/>
    <property type="molecule type" value="mRNA"/>
</dbReference>
<dbReference type="EMBL" id="BT030353">
    <property type="protein sequence ID" value="ABO38766.1"/>
    <property type="molecule type" value="mRNA"/>
</dbReference>
<dbReference type="RefSeq" id="NP_187339.2">
    <property type="nucleotide sequence ID" value="NM_111563.4"/>
</dbReference>
<dbReference type="SMR" id="Q8GXA1"/>
<dbReference type="FunCoup" id="Q8GXA1">
    <property type="interactions" value="158"/>
</dbReference>
<dbReference type="STRING" id="3702.Q8GXA1"/>
<dbReference type="GlyCosmos" id="Q8GXA1">
    <property type="glycosylation" value="3 sites, No reported glycans"/>
</dbReference>
<dbReference type="GlyGen" id="Q8GXA1">
    <property type="glycosylation" value="3 sites"/>
</dbReference>
<dbReference type="PaxDb" id="3702-AT3G06830.1"/>
<dbReference type="ProteomicsDB" id="226206"/>
<dbReference type="EnsemblPlants" id="AT3G06830.1">
    <property type="protein sequence ID" value="AT3G06830.1"/>
    <property type="gene ID" value="AT3G06830"/>
</dbReference>
<dbReference type="GeneID" id="819867"/>
<dbReference type="Gramene" id="AT3G06830.1">
    <property type="protein sequence ID" value="AT3G06830.1"/>
    <property type="gene ID" value="AT3G06830"/>
</dbReference>
<dbReference type="KEGG" id="ath:AT3G06830"/>
<dbReference type="Araport" id="AT3G06830"/>
<dbReference type="TAIR" id="AT3G06830"/>
<dbReference type="eggNOG" id="ENOG502R6WA">
    <property type="taxonomic scope" value="Eukaryota"/>
</dbReference>
<dbReference type="HOGENOM" id="CLU_012243_9_1_1"/>
<dbReference type="InParanoid" id="Q8GXA1"/>
<dbReference type="OMA" id="HGCHITG"/>
<dbReference type="PhylomeDB" id="Q8GXA1"/>
<dbReference type="BioCyc" id="ARA:AT3G06830-MONOMER"/>
<dbReference type="BRENDA" id="3.1.1.11">
    <property type="organism ID" value="399"/>
</dbReference>
<dbReference type="UniPathway" id="UPA00545">
    <property type="reaction ID" value="UER00823"/>
</dbReference>
<dbReference type="PRO" id="PR:Q8GXA1"/>
<dbReference type="Proteomes" id="UP000006548">
    <property type="component" value="Chromosome 3"/>
</dbReference>
<dbReference type="ExpressionAtlas" id="Q8GXA1">
    <property type="expression patterns" value="baseline and differential"/>
</dbReference>
<dbReference type="GO" id="GO:0005576">
    <property type="term" value="C:extracellular region"/>
    <property type="evidence" value="ECO:0007669"/>
    <property type="project" value="UniProtKB-KW"/>
</dbReference>
<dbReference type="GO" id="GO:0090406">
    <property type="term" value="C:pollen tube"/>
    <property type="evidence" value="ECO:0000314"/>
    <property type="project" value="TAIR"/>
</dbReference>
<dbReference type="GO" id="GO:0004857">
    <property type="term" value="F:enzyme inhibitor activity"/>
    <property type="evidence" value="ECO:0007669"/>
    <property type="project" value="InterPro"/>
</dbReference>
<dbReference type="GO" id="GO:0030599">
    <property type="term" value="F:pectinesterase activity"/>
    <property type="evidence" value="ECO:0007669"/>
    <property type="project" value="UniProtKB-EC"/>
</dbReference>
<dbReference type="GO" id="GO:0042545">
    <property type="term" value="P:cell wall modification"/>
    <property type="evidence" value="ECO:0007669"/>
    <property type="project" value="InterPro"/>
</dbReference>
<dbReference type="GO" id="GO:0045490">
    <property type="term" value="P:pectin catabolic process"/>
    <property type="evidence" value="ECO:0007669"/>
    <property type="project" value="UniProtKB-UniPathway"/>
</dbReference>
<dbReference type="CDD" id="cd15798">
    <property type="entry name" value="PMEI-like_3"/>
    <property type="match status" value="1"/>
</dbReference>
<dbReference type="FunFam" id="1.20.140.40:FF:000001">
    <property type="entry name" value="Pectinesterase"/>
    <property type="match status" value="1"/>
</dbReference>
<dbReference type="FunFam" id="2.160.20.10:FF:000001">
    <property type="entry name" value="Pectinesterase"/>
    <property type="match status" value="1"/>
</dbReference>
<dbReference type="Gene3D" id="1.20.140.40">
    <property type="entry name" value="Invertase/pectin methylesterase inhibitor family protein"/>
    <property type="match status" value="1"/>
</dbReference>
<dbReference type="Gene3D" id="2.160.20.10">
    <property type="entry name" value="Single-stranded right-handed beta-helix, Pectin lyase-like"/>
    <property type="match status" value="1"/>
</dbReference>
<dbReference type="InterPro" id="IPR035513">
    <property type="entry name" value="Invertase/methylesterase_inhib"/>
</dbReference>
<dbReference type="InterPro" id="IPR012334">
    <property type="entry name" value="Pectin_lyas_fold"/>
</dbReference>
<dbReference type="InterPro" id="IPR011050">
    <property type="entry name" value="Pectin_lyase_fold/virulence"/>
</dbReference>
<dbReference type="InterPro" id="IPR033131">
    <property type="entry name" value="Pectinesterase_Asp_AS"/>
</dbReference>
<dbReference type="InterPro" id="IPR000070">
    <property type="entry name" value="Pectinesterase_cat"/>
</dbReference>
<dbReference type="InterPro" id="IPR006501">
    <property type="entry name" value="Pectinesterase_inhib_dom"/>
</dbReference>
<dbReference type="InterPro" id="IPR018040">
    <property type="entry name" value="Pectinesterase_Tyr_AS"/>
</dbReference>
<dbReference type="NCBIfam" id="TIGR01614">
    <property type="entry name" value="PME_inhib"/>
    <property type="match status" value="1"/>
</dbReference>
<dbReference type="PANTHER" id="PTHR31707">
    <property type="entry name" value="PECTINESTERASE"/>
    <property type="match status" value="1"/>
</dbReference>
<dbReference type="Pfam" id="PF01095">
    <property type="entry name" value="Pectinesterase"/>
    <property type="match status" value="1"/>
</dbReference>
<dbReference type="Pfam" id="PF04043">
    <property type="entry name" value="PMEI"/>
    <property type="match status" value="1"/>
</dbReference>
<dbReference type="SMART" id="SM00856">
    <property type="entry name" value="PMEI"/>
    <property type="match status" value="1"/>
</dbReference>
<dbReference type="SUPFAM" id="SSF51126">
    <property type="entry name" value="Pectin lyase-like"/>
    <property type="match status" value="1"/>
</dbReference>
<dbReference type="SUPFAM" id="SSF101148">
    <property type="entry name" value="Plant invertase/pectin methylesterase inhibitor"/>
    <property type="match status" value="1"/>
</dbReference>
<dbReference type="PROSITE" id="PS00800">
    <property type="entry name" value="PECTINESTERASE_1"/>
    <property type="match status" value="1"/>
</dbReference>
<dbReference type="PROSITE" id="PS00503">
    <property type="entry name" value="PECTINESTERASE_2"/>
    <property type="match status" value="1"/>
</dbReference>